<organism>
    <name type="scientific">Encephalitozoon cuniculi (strain GB-M1)</name>
    <name type="common">Microsporidian parasite</name>
    <dbReference type="NCBI Taxonomy" id="284813"/>
    <lineage>
        <taxon>Eukaryota</taxon>
        <taxon>Fungi</taxon>
        <taxon>Fungi incertae sedis</taxon>
        <taxon>Microsporidia</taxon>
        <taxon>Unikaryonidae</taxon>
        <taxon>Encephalitozoon</taxon>
    </lineage>
</organism>
<feature type="chain" id="PRO_0000095102" description="Probable M1 family aminopeptidase 2">
    <location>
        <begin position="1"/>
        <end position="864"/>
    </location>
</feature>
<feature type="active site" description="Proton acceptor" evidence="2">
    <location>
        <position position="326"/>
    </location>
</feature>
<feature type="binding site" evidence="1">
    <location>
        <position position="149"/>
    </location>
    <ligand>
        <name>substrate</name>
    </ligand>
</feature>
<feature type="binding site" evidence="1">
    <location>
        <begin position="289"/>
        <end position="293"/>
    </location>
    <ligand>
        <name>substrate</name>
    </ligand>
</feature>
<feature type="binding site" evidence="2">
    <location>
        <position position="325"/>
    </location>
    <ligand>
        <name>Zn(2+)</name>
        <dbReference type="ChEBI" id="CHEBI:29105"/>
        <note>catalytic</note>
    </ligand>
</feature>
<feature type="binding site" evidence="2">
    <location>
        <position position="329"/>
    </location>
    <ligand>
        <name>Zn(2+)</name>
        <dbReference type="ChEBI" id="CHEBI:29105"/>
        <note>catalytic</note>
    </ligand>
</feature>
<feature type="binding site" evidence="2">
    <location>
        <position position="348"/>
    </location>
    <ligand>
        <name>Zn(2+)</name>
        <dbReference type="ChEBI" id="CHEBI:29105"/>
        <note>catalytic</note>
    </ligand>
</feature>
<feature type="site" description="Transition state stabilizer" evidence="1">
    <location>
        <position position="413"/>
    </location>
</feature>
<name>AMP12_ENCCU</name>
<proteinExistence type="inferred from homology"/>
<dbReference type="EC" id="3.4.11.-"/>
<dbReference type="EMBL" id="AL590448">
    <property type="protein sequence ID" value="CAD26312.1"/>
    <property type="molecule type" value="Genomic_DNA"/>
</dbReference>
<dbReference type="RefSeq" id="NP_597136.1">
    <property type="nucleotide sequence ID" value="NM_001041745.1"/>
</dbReference>
<dbReference type="SMR" id="Q8SRG3"/>
<dbReference type="FunCoup" id="Q8SRG3">
    <property type="interactions" value="160"/>
</dbReference>
<dbReference type="STRING" id="284813.Q8SRG3"/>
<dbReference type="GeneID" id="859558"/>
<dbReference type="KEGG" id="ecu:ECU08_0070"/>
<dbReference type="VEuPathDB" id="MicrosporidiaDB:ECU08_0070"/>
<dbReference type="HOGENOM" id="CLU_003705_2_3_1"/>
<dbReference type="InParanoid" id="Q8SRG3"/>
<dbReference type="OMA" id="HDMAGFY"/>
<dbReference type="OrthoDB" id="10031169at2759"/>
<dbReference type="Proteomes" id="UP000000819">
    <property type="component" value="Chromosome VIII"/>
</dbReference>
<dbReference type="GO" id="GO:0005737">
    <property type="term" value="C:cytoplasm"/>
    <property type="evidence" value="ECO:0007669"/>
    <property type="project" value="TreeGrafter"/>
</dbReference>
<dbReference type="GO" id="GO:0005615">
    <property type="term" value="C:extracellular space"/>
    <property type="evidence" value="ECO:0007669"/>
    <property type="project" value="TreeGrafter"/>
</dbReference>
<dbReference type="GO" id="GO:0016020">
    <property type="term" value="C:membrane"/>
    <property type="evidence" value="ECO:0007669"/>
    <property type="project" value="TreeGrafter"/>
</dbReference>
<dbReference type="GO" id="GO:0070006">
    <property type="term" value="F:metalloaminopeptidase activity"/>
    <property type="evidence" value="ECO:0007669"/>
    <property type="project" value="TreeGrafter"/>
</dbReference>
<dbReference type="GO" id="GO:0042277">
    <property type="term" value="F:peptide binding"/>
    <property type="evidence" value="ECO:0007669"/>
    <property type="project" value="TreeGrafter"/>
</dbReference>
<dbReference type="GO" id="GO:0008270">
    <property type="term" value="F:zinc ion binding"/>
    <property type="evidence" value="ECO:0007669"/>
    <property type="project" value="InterPro"/>
</dbReference>
<dbReference type="GO" id="GO:0043171">
    <property type="term" value="P:peptide catabolic process"/>
    <property type="evidence" value="ECO:0007669"/>
    <property type="project" value="TreeGrafter"/>
</dbReference>
<dbReference type="GO" id="GO:0006508">
    <property type="term" value="P:proteolysis"/>
    <property type="evidence" value="ECO:0007669"/>
    <property type="project" value="UniProtKB-KW"/>
</dbReference>
<dbReference type="CDD" id="cd09601">
    <property type="entry name" value="M1_APN-Q_like"/>
    <property type="match status" value="1"/>
</dbReference>
<dbReference type="FunFam" id="1.10.390.10:FF:000006">
    <property type="entry name" value="Puromycin-sensitive aminopeptidase"/>
    <property type="match status" value="1"/>
</dbReference>
<dbReference type="Gene3D" id="1.25.50.20">
    <property type="match status" value="1"/>
</dbReference>
<dbReference type="Gene3D" id="2.60.40.1910">
    <property type="match status" value="1"/>
</dbReference>
<dbReference type="Gene3D" id="1.10.390.10">
    <property type="entry name" value="Neutral Protease Domain 2"/>
    <property type="match status" value="1"/>
</dbReference>
<dbReference type="Gene3D" id="2.60.40.1730">
    <property type="entry name" value="tricorn interacting facor f3 domain"/>
    <property type="match status" value="1"/>
</dbReference>
<dbReference type="InterPro" id="IPR045357">
    <property type="entry name" value="Aminopeptidase_N-like_N"/>
</dbReference>
<dbReference type="InterPro" id="IPR042097">
    <property type="entry name" value="Aminopeptidase_N-like_N_sf"/>
</dbReference>
<dbReference type="InterPro" id="IPR024571">
    <property type="entry name" value="ERAP1-like_C_dom"/>
</dbReference>
<dbReference type="InterPro" id="IPR034016">
    <property type="entry name" value="M1_APN-typ"/>
</dbReference>
<dbReference type="InterPro" id="IPR001930">
    <property type="entry name" value="Peptidase_M1"/>
</dbReference>
<dbReference type="InterPro" id="IPR050344">
    <property type="entry name" value="Peptidase_M1_aminopeptidases"/>
</dbReference>
<dbReference type="InterPro" id="IPR014782">
    <property type="entry name" value="Peptidase_M1_dom"/>
</dbReference>
<dbReference type="InterPro" id="IPR027268">
    <property type="entry name" value="Peptidase_M4/M1_CTD_sf"/>
</dbReference>
<dbReference type="PANTHER" id="PTHR11533">
    <property type="entry name" value="PROTEASE M1 ZINC METALLOPROTEASE"/>
    <property type="match status" value="1"/>
</dbReference>
<dbReference type="PANTHER" id="PTHR11533:SF174">
    <property type="entry name" value="PUROMYCIN-SENSITIVE AMINOPEPTIDASE-RELATED"/>
    <property type="match status" value="1"/>
</dbReference>
<dbReference type="Pfam" id="PF11838">
    <property type="entry name" value="ERAP1_C"/>
    <property type="match status" value="1"/>
</dbReference>
<dbReference type="Pfam" id="PF01433">
    <property type="entry name" value="Peptidase_M1"/>
    <property type="match status" value="1"/>
</dbReference>
<dbReference type="Pfam" id="PF17900">
    <property type="entry name" value="Peptidase_M1_N"/>
    <property type="match status" value="1"/>
</dbReference>
<dbReference type="PRINTS" id="PR00756">
    <property type="entry name" value="ALADIPTASE"/>
</dbReference>
<dbReference type="SUPFAM" id="SSF63737">
    <property type="entry name" value="Leukotriene A4 hydrolase N-terminal domain"/>
    <property type="match status" value="1"/>
</dbReference>
<dbReference type="SUPFAM" id="SSF55486">
    <property type="entry name" value="Metalloproteases ('zincins'), catalytic domain"/>
    <property type="match status" value="1"/>
</dbReference>
<dbReference type="PROSITE" id="PS00142">
    <property type="entry name" value="ZINC_PROTEASE"/>
    <property type="match status" value="1"/>
</dbReference>
<protein>
    <recommendedName>
        <fullName>Probable M1 family aminopeptidase 2</fullName>
        <ecNumber>3.4.11.-</ecNumber>
    </recommendedName>
</protein>
<gene>
    <name type="ordered locus">ECU08_0070</name>
</gene>
<sequence length="864" mass="97521">MRWIKVMAGLLPMIGSKGADEKDSSQQRRLSRVVVPEHYDLHVKILDAGFCGSVGIRVMISQDVSEIVLNAKELEIRDAGIVVEGARIPGRVVVGEAEKELEVVRIVFPSSLRAGPGYLTMEFCGDYNNGLVGLYKSGGPKEVYSTHFEPTDARWVFPCFDQPDMKATFKISIDAGSKFTVLANTQAIPSLREEYGDRKIEYFEETCKMSTYLVAFVVGELSYIEDWSKDGVRLRVYGDSSEVEWGRYGLEVGKRCLEYFSEYFGVGYEFPRAGSAKIDMVGIPNFSSGAMENWGLITFRRESLLYVPGKSNVEDMKNVAETVCHELGHMWFGNLVTMSWWDDLWLNEGFATWVSFKGMENIGSVVSWDVWGEFVLWNVVRGMVDDGLGKSHQIRMNVTDPGEIGEIFDSISYCKGASVIRMIERYVGESVFMLGIRRYIKEHMYGNGNAMSLWKAIGEEYGEDISEMVEGWISQAGYPVVSVQDCGSSLVLSQSRYSMLGKSDDSLWTIPVVVSWEGKGQERIELRGRETTVRKRSSVYKVNAEYGGFYRVLYDSAGLSGLESRIDSLSVVDRVNVIEDVFGLGFGLYGGLEHGLRRISEYYSDSYHVARSGIEKLLRLRSVFYDDAEIVSLIDKKVRKMILPCVGRIDVFDIGTSVESVSMNKYVLSVGVEVGIREAVEKVQELWRRHVEAGEELGELRWIVYKAVVDENLGYMMDKYKNGDTPGMRREVMNGFSGIKREENFLDVVGNLSQFSVEDIGVVIGSISRGGAFRDAMVEYVVSHGEELYLMVHKNAMLYNMIIMSLRHVSGDLIVEKVERFLSGIKHSGSNLSIEKVRNEIQWRRRMRGIREEVLRGLLPEAEK</sequence>
<accession>Q8SRG3</accession>
<comment type="cofactor">
    <cofactor evidence="1">
        <name>Zn(2+)</name>
        <dbReference type="ChEBI" id="CHEBI:29105"/>
    </cofactor>
    <text evidence="1">Binds 1 zinc ion per subunit.</text>
</comment>
<comment type="similarity">
    <text evidence="3">Belongs to the peptidase M1 family.</text>
</comment>
<reference key="1">
    <citation type="journal article" date="2001" name="Nature">
        <title>Genome sequence and gene compaction of the eukaryote parasite Encephalitozoon cuniculi.</title>
        <authorList>
            <person name="Katinka M.D."/>
            <person name="Duprat S."/>
            <person name="Cornillot E."/>
            <person name="Metenier G."/>
            <person name="Thomarat F."/>
            <person name="Prensier G."/>
            <person name="Barbe V."/>
            <person name="Peyretaillade E."/>
            <person name="Brottier P."/>
            <person name="Wincker P."/>
            <person name="Delbac F."/>
            <person name="El Alaoui H."/>
            <person name="Peyret P."/>
            <person name="Saurin W."/>
            <person name="Gouy M."/>
            <person name="Weissenbach J."/>
            <person name="Vivares C.P."/>
        </authorList>
    </citation>
    <scope>NUCLEOTIDE SEQUENCE [LARGE SCALE GENOMIC DNA]</scope>
    <source>
        <strain>GB-M1</strain>
    </source>
</reference>
<evidence type="ECO:0000250" key="1"/>
<evidence type="ECO:0000255" key="2">
    <source>
        <dbReference type="PROSITE-ProRule" id="PRU10095"/>
    </source>
</evidence>
<evidence type="ECO:0000305" key="3"/>
<keyword id="KW-0031">Aminopeptidase</keyword>
<keyword id="KW-0378">Hydrolase</keyword>
<keyword id="KW-0479">Metal-binding</keyword>
<keyword id="KW-0482">Metalloprotease</keyword>
<keyword id="KW-0645">Protease</keyword>
<keyword id="KW-1185">Reference proteome</keyword>
<keyword id="KW-0862">Zinc</keyword>